<comment type="function">
    <text evidence="1">Catalyzes the NAD-dependent conversion of D-erythrose 4-phosphate to 4-phosphoerythronate.</text>
</comment>
<comment type="catalytic activity">
    <reaction evidence="1">
        <text>D-erythrose 4-phosphate + NAD(+) + H2O = 4-phospho-D-erythronate + NADH + 2 H(+)</text>
        <dbReference type="Rhea" id="RHEA:12056"/>
        <dbReference type="ChEBI" id="CHEBI:15377"/>
        <dbReference type="ChEBI" id="CHEBI:15378"/>
        <dbReference type="ChEBI" id="CHEBI:16897"/>
        <dbReference type="ChEBI" id="CHEBI:57540"/>
        <dbReference type="ChEBI" id="CHEBI:57945"/>
        <dbReference type="ChEBI" id="CHEBI:58766"/>
        <dbReference type="EC" id="1.2.1.72"/>
    </reaction>
</comment>
<comment type="pathway">
    <text evidence="1">Cofactor biosynthesis; pyridoxine 5'-phosphate biosynthesis; pyridoxine 5'-phosphate from D-erythrose 4-phosphate: step 1/5.</text>
</comment>
<comment type="subunit">
    <text evidence="1">Homotetramer.</text>
</comment>
<comment type="subcellular location">
    <subcellularLocation>
        <location evidence="1">Cytoplasm</location>
    </subcellularLocation>
</comment>
<comment type="similarity">
    <text evidence="1">Belongs to the glyceraldehyde-3-phosphate dehydrogenase family. Epd subfamily.</text>
</comment>
<organism>
    <name type="scientific">Shewanella frigidimarina (strain NCIMB 400)</name>
    <dbReference type="NCBI Taxonomy" id="318167"/>
    <lineage>
        <taxon>Bacteria</taxon>
        <taxon>Pseudomonadati</taxon>
        <taxon>Pseudomonadota</taxon>
        <taxon>Gammaproteobacteria</taxon>
        <taxon>Alteromonadales</taxon>
        <taxon>Shewanellaceae</taxon>
        <taxon>Shewanella</taxon>
    </lineage>
</organism>
<accession>Q087Q7</accession>
<feature type="chain" id="PRO_0000293162" description="D-erythrose-4-phosphate dehydrogenase">
    <location>
        <begin position="1"/>
        <end position="339"/>
    </location>
</feature>
<feature type="active site" description="Nucleophile" evidence="1">
    <location>
        <position position="154"/>
    </location>
</feature>
<feature type="binding site" evidence="1">
    <location>
        <begin position="11"/>
        <end position="12"/>
    </location>
    <ligand>
        <name>NAD(+)</name>
        <dbReference type="ChEBI" id="CHEBI:57540"/>
    </ligand>
</feature>
<feature type="binding site" evidence="1">
    <location>
        <begin position="153"/>
        <end position="155"/>
    </location>
    <ligand>
        <name>substrate</name>
    </ligand>
</feature>
<feature type="binding site" evidence="1">
    <location>
        <position position="199"/>
    </location>
    <ligand>
        <name>substrate</name>
    </ligand>
</feature>
<feature type="binding site" evidence="1">
    <location>
        <begin position="212"/>
        <end position="213"/>
    </location>
    <ligand>
        <name>substrate</name>
    </ligand>
</feature>
<feature type="binding site" evidence="1">
    <location>
        <position position="235"/>
    </location>
    <ligand>
        <name>substrate</name>
    </ligand>
</feature>
<feature type="binding site" evidence="1">
    <location>
        <position position="317"/>
    </location>
    <ligand>
        <name>NAD(+)</name>
        <dbReference type="ChEBI" id="CHEBI:57540"/>
    </ligand>
</feature>
<feature type="site" description="Activates thiol group during catalysis" evidence="1">
    <location>
        <position position="181"/>
    </location>
</feature>
<name>E4PD_SHEFN</name>
<dbReference type="EC" id="1.2.1.72" evidence="1"/>
<dbReference type="EMBL" id="CP000447">
    <property type="protein sequence ID" value="ABI70508.1"/>
    <property type="molecule type" value="Genomic_DNA"/>
</dbReference>
<dbReference type="RefSeq" id="WP_011636135.1">
    <property type="nucleotide sequence ID" value="NC_008345.1"/>
</dbReference>
<dbReference type="SMR" id="Q087Q7"/>
<dbReference type="STRING" id="318167.Sfri_0648"/>
<dbReference type="KEGG" id="sfr:Sfri_0648"/>
<dbReference type="eggNOG" id="COG0057">
    <property type="taxonomic scope" value="Bacteria"/>
</dbReference>
<dbReference type="HOGENOM" id="CLU_030140_0_2_6"/>
<dbReference type="OrthoDB" id="9803304at2"/>
<dbReference type="UniPathway" id="UPA00244">
    <property type="reaction ID" value="UER00309"/>
</dbReference>
<dbReference type="Proteomes" id="UP000000684">
    <property type="component" value="Chromosome"/>
</dbReference>
<dbReference type="GO" id="GO:0005737">
    <property type="term" value="C:cytoplasm"/>
    <property type="evidence" value="ECO:0007669"/>
    <property type="project" value="UniProtKB-SubCell"/>
</dbReference>
<dbReference type="GO" id="GO:0048001">
    <property type="term" value="F:erythrose-4-phosphate dehydrogenase activity"/>
    <property type="evidence" value="ECO:0007669"/>
    <property type="project" value="UniProtKB-UniRule"/>
</dbReference>
<dbReference type="GO" id="GO:0051287">
    <property type="term" value="F:NAD binding"/>
    <property type="evidence" value="ECO:0007669"/>
    <property type="project" value="InterPro"/>
</dbReference>
<dbReference type="GO" id="GO:0042823">
    <property type="term" value="P:pyridoxal phosphate biosynthetic process"/>
    <property type="evidence" value="ECO:0007669"/>
    <property type="project" value="UniProtKB-UniRule"/>
</dbReference>
<dbReference type="GO" id="GO:0008615">
    <property type="term" value="P:pyridoxine biosynthetic process"/>
    <property type="evidence" value="ECO:0007669"/>
    <property type="project" value="UniProtKB-UniRule"/>
</dbReference>
<dbReference type="CDD" id="cd23937">
    <property type="entry name" value="GAPDH_C_E4PDH"/>
    <property type="match status" value="1"/>
</dbReference>
<dbReference type="CDD" id="cd17892">
    <property type="entry name" value="GAPDH_N_E4PDH"/>
    <property type="match status" value="1"/>
</dbReference>
<dbReference type="FunFam" id="3.30.360.10:FF:000007">
    <property type="entry name" value="D-erythrose-4-phosphate dehydrogenase"/>
    <property type="match status" value="1"/>
</dbReference>
<dbReference type="FunFam" id="3.40.50.720:FF:000001">
    <property type="entry name" value="Glyceraldehyde-3-phosphate dehydrogenase"/>
    <property type="match status" value="1"/>
</dbReference>
<dbReference type="Gene3D" id="3.30.360.10">
    <property type="entry name" value="Dihydrodipicolinate Reductase, domain 2"/>
    <property type="match status" value="1"/>
</dbReference>
<dbReference type="Gene3D" id="3.40.50.720">
    <property type="entry name" value="NAD(P)-binding Rossmann-like Domain"/>
    <property type="match status" value="1"/>
</dbReference>
<dbReference type="HAMAP" id="MF_01640">
    <property type="entry name" value="E4P_dehydrog"/>
    <property type="match status" value="1"/>
</dbReference>
<dbReference type="InterPro" id="IPR006422">
    <property type="entry name" value="E4P_DH_bac"/>
</dbReference>
<dbReference type="InterPro" id="IPR020831">
    <property type="entry name" value="GlycerAld/Erythrose_P_DH"/>
</dbReference>
<dbReference type="InterPro" id="IPR020830">
    <property type="entry name" value="GlycerAld_3-P_DH_AS"/>
</dbReference>
<dbReference type="InterPro" id="IPR020829">
    <property type="entry name" value="GlycerAld_3-P_DH_cat"/>
</dbReference>
<dbReference type="InterPro" id="IPR020828">
    <property type="entry name" value="GlycerAld_3-P_DH_NAD(P)-bd"/>
</dbReference>
<dbReference type="InterPro" id="IPR036291">
    <property type="entry name" value="NAD(P)-bd_dom_sf"/>
</dbReference>
<dbReference type="NCBIfam" id="TIGR01532">
    <property type="entry name" value="E4PD_g-proteo"/>
    <property type="match status" value="1"/>
</dbReference>
<dbReference type="NCBIfam" id="NF010058">
    <property type="entry name" value="PRK13535.1"/>
    <property type="match status" value="1"/>
</dbReference>
<dbReference type="PANTHER" id="PTHR43148">
    <property type="entry name" value="GLYCERALDEHYDE-3-PHOSPHATE DEHYDROGENASE 2"/>
    <property type="match status" value="1"/>
</dbReference>
<dbReference type="Pfam" id="PF02800">
    <property type="entry name" value="Gp_dh_C"/>
    <property type="match status" value="1"/>
</dbReference>
<dbReference type="Pfam" id="PF00044">
    <property type="entry name" value="Gp_dh_N"/>
    <property type="match status" value="1"/>
</dbReference>
<dbReference type="PIRSF" id="PIRSF000149">
    <property type="entry name" value="GAP_DH"/>
    <property type="match status" value="1"/>
</dbReference>
<dbReference type="PRINTS" id="PR00078">
    <property type="entry name" value="G3PDHDRGNASE"/>
</dbReference>
<dbReference type="SMART" id="SM00846">
    <property type="entry name" value="Gp_dh_N"/>
    <property type="match status" value="1"/>
</dbReference>
<dbReference type="SUPFAM" id="SSF55347">
    <property type="entry name" value="Glyceraldehyde-3-phosphate dehydrogenase-like, C-terminal domain"/>
    <property type="match status" value="1"/>
</dbReference>
<dbReference type="SUPFAM" id="SSF51735">
    <property type="entry name" value="NAD(P)-binding Rossmann-fold domains"/>
    <property type="match status" value="1"/>
</dbReference>
<dbReference type="PROSITE" id="PS00071">
    <property type="entry name" value="GAPDH"/>
    <property type="match status" value="1"/>
</dbReference>
<reference key="1">
    <citation type="submission" date="2006-08" db="EMBL/GenBank/DDBJ databases">
        <title>Complete sequence of Shewanella frigidimarina NCIMB 400.</title>
        <authorList>
            <consortium name="US DOE Joint Genome Institute"/>
            <person name="Copeland A."/>
            <person name="Lucas S."/>
            <person name="Lapidus A."/>
            <person name="Barry K."/>
            <person name="Detter J.C."/>
            <person name="Glavina del Rio T."/>
            <person name="Hammon N."/>
            <person name="Israni S."/>
            <person name="Dalin E."/>
            <person name="Tice H."/>
            <person name="Pitluck S."/>
            <person name="Fredrickson J.K."/>
            <person name="Kolker E."/>
            <person name="McCuel L.A."/>
            <person name="DiChristina T."/>
            <person name="Nealson K.H."/>
            <person name="Newman D."/>
            <person name="Tiedje J.M."/>
            <person name="Zhou J."/>
            <person name="Romine M.F."/>
            <person name="Culley D.E."/>
            <person name="Serres M."/>
            <person name="Chertkov O."/>
            <person name="Brettin T."/>
            <person name="Bruce D."/>
            <person name="Han C."/>
            <person name="Tapia R."/>
            <person name="Gilna P."/>
            <person name="Schmutz J."/>
            <person name="Larimer F."/>
            <person name="Land M."/>
            <person name="Hauser L."/>
            <person name="Kyrpides N."/>
            <person name="Mikhailova N."/>
            <person name="Richardson P."/>
        </authorList>
    </citation>
    <scope>NUCLEOTIDE SEQUENCE [LARGE SCALE GENOMIC DNA]</scope>
    <source>
        <strain>NCIMB 400</strain>
    </source>
</reference>
<gene>
    <name evidence="1" type="primary">epd</name>
    <name type="ordered locus">Sfri_0648</name>
</gene>
<keyword id="KW-0963">Cytoplasm</keyword>
<keyword id="KW-0520">NAD</keyword>
<keyword id="KW-0560">Oxidoreductase</keyword>
<keyword id="KW-0664">Pyridoxine biosynthesis</keyword>
<keyword id="KW-1185">Reference proteome</keyword>
<evidence type="ECO:0000255" key="1">
    <source>
        <dbReference type="HAMAP-Rule" id="MF_01640"/>
    </source>
</evidence>
<protein>
    <recommendedName>
        <fullName evidence="1">D-erythrose-4-phosphate dehydrogenase</fullName>
        <shortName evidence="1">E4PDH</shortName>
        <ecNumber evidence="1">1.2.1.72</ecNumber>
    </recommendedName>
</protein>
<sequence length="339" mass="37508">MIRVAINGYGRIGRSILRALYESGKRQQIQIVAINELAKPEAICHLTQYDTTHGRFKHTVKLNGDQLLIGDDSILLLNQPDANLLPWAELDIDIVYEATGSLIDRQACEAHIHAGAKQVLISHPSSADVDETIVYGVNHDLLRAEHTVISNASCTTNCIVPVIDVLDKHFEVKSGAITTIHSAMNDQQVIDAYHDDLRRTRAAGQSIIPVDTKLARGIERILPHMKDKFEAISVRVPTINVTAIDLSVTLEKKVNIEQINSVLQRASNGSFNGILGYTDEPLVSCDFNHDPRSSIVDGTQTRVSAGHLVKLLLWCDNEWGFANRMLDTSLAMIQAKLDR</sequence>
<proteinExistence type="inferred from homology"/>